<organism>
    <name type="scientific">Francisella tularensis subsp. tularensis (strain WY96-3418)</name>
    <dbReference type="NCBI Taxonomy" id="418136"/>
    <lineage>
        <taxon>Bacteria</taxon>
        <taxon>Pseudomonadati</taxon>
        <taxon>Pseudomonadota</taxon>
        <taxon>Gammaproteobacteria</taxon>
        <taxon>Thiotrichales</taxon>
        <taxon>Francisellaceae</taxon>
        <taxon>Francisella</taxon>
    </lineage>
</organism>
<protein>
    <recommendedName>
        <fullName evidence="1">Thymidylate kinase</fullName>
        <ecNumber evidence="1">2.7.4.9</ecNumber>
    </recommendedName>
    <alternativeName>
        <fullName evidence="1">dTMP kinase</fullName>
    </alternativeName>
</protein>
<evidence type="ECO:0000255" key="1">
    <source>
        <dbReference type="HAMAP-Rule" id="MF_00165"/>
    </source>
</evidence>
<accession>A4IW74</accession>
<keyword id="KW-0067">ATP-binding</keyword>
<keyword id="KW-0418">Kinase</keyword>
<keyword id="KW-0545">Nucleotide biosynthesis</keyword>
<keyword id="KW-0547">Nucleotide-binding</keyword>
<keyword id="KW-0808">Transferase</keyword>
<gene>
    <name evidence="1" type="primary">tmk</name>
    <name type="ordered locus">FTW_0202</name>
</gene>
<feature type="chain" id="PRO_1000023197" description="Thymidylate kinase">
    <location>
        <begin position="1"/>
        <end position="209"/>
    </location>
</feature>
<feature type="binding site" evidence="1">
    <location>
        <begin position="10"/>
        <end position="17"/>
    </location>
    <ligand>
        <name>ATP</name>
        <dbReference type="ChEBI" id="CHEBI:30616"/>
    </ligand>
</feature>
<name>KTHY_FRATW</name>
<proteinExistence type="inferred from homology"/>
<comment type="function">
    <text evidence="1">Phosphorylation of dTMP to form dTDP in both de novo and salvage pathways of dTTP synthesis.</text>
</comment>
<comment type="catalytic activity">
    <reaction evidence="1">
        <text>dTMP + ATP = dTDP + ADP</text>
        <dbReference type="Rhea" id="RHEA:13517"/>
        <dbReference type="ChEBI" id="CHEBI:30616"/>
        <dbReference type="ChEBI" id="CHEBI:58369"/>
        <dbReference type="ChEBI" id="CHEBI:63528"/>
        <dbReference type="ChEBI" id="CHEBI:456216"/>
        <dbReference type="EC" id="2.7.4.9"/>
    </reaction>
</comment>
<comment type="similarity">
    <text evidence="1">Belongs to the thymidylate kinase family.</text>
</comment>
<dbReference type="EC" id="2.7.4.9" evidence="1"/>
<dbReference type="EMBL" id="CP000608">
    <property type="protein sequence ID" value="ABO46176.1"/>
    <property type="molecule type" value="Genomic_DNA"/>
</dbReference>
<dbReference type="RefSeq" id="WP_003019864.1">
    <property type="nucleotide sequence ID" value="NC_009257.1"/>
</dbReference>
<dbReference type="SMR" id="A4IW74"/>
<dbReference type="KEGG" id="ftw:FTW_0202"/>
<dbReference type="HOGENOM" id="CLU_049131_0_1_6"/>
<dbReference type="GO" id="GO:0005829">
    <property type="term" value="C:cytosol"/>
    <property type="evidence" value="ECO:0007669"/>
    <property type="project" value="TreeGrafter"/>
</dbReference>
<dbReference type="GO" id="GO:0005524">
    <property type="term" value="F:ATP binding"/>
    <property type="evidence" value="ECO:0007669"/>
    <property type="project" value="UniProtKB-UniRule"/>
</dbReference>
<dbReference type="GO" id="GO:0004798">
    <property type="term" value="F:dTMP kinase activity"/>
    <property type="evidence" value="ECO:0007669"/>
    <property type="project" value="UniProtKB-UniRule"/>
</dbReference>
<dbReference type="GO" id="GO:0006233">
    <property type="term" value="P:dTDP biosynthetic process"/>
    <property type="evidence" value="ECO:0007669"/>
    <property type="project" value="InterPro"/>
</dbReference>
<dbReference type="GO" id="GO:0006235">
    <property type="term" value="P:dTTP biosynthetic process"/>
    <property type="evidence" value="ECO:0007669"/>
    <property type="project" value="UniProtKB-UniRule"/>
</dbReference>
<dbReference type="GO" id="GO:0006227">
    <property type="term" value="P:dUDP biosynthetic process"/>
    <property type="evidence" value="ECO:0007669"/>
    <property type="project" value="TreeGrafter"/>
</dbReference>
<dbReference type="CDD" id="cd01672">
    <property type="entry name" value="TMPK"/>
    <property type="match status" value="1"/>
</dbReference>
<dbReference type="FunFam" id="3.40.50.300:FF:000225">
    <property type="entry name" value="Thymidylate kinase"/>
    <property type="match status" value="1"/>
</dbReference>
<dbReference type="Gene3D" id="3.40.50.300">
    <property type="entry name" value="P-loop containing nucleotide triphosphate hydrolases"/>
    <property type="match status" value="1"/>
</dbReference>
<dbReference type="HAMAP" id="MF_00165">
    <property type="entry name" value="Thymidylate_kinase"/>
    <property type="match status" value="1"/>
</dbReference>
<dbReference type="InterPro" id="IPR027417">
    <property type="entry name" value="P-loop_NTPase"/>
</dbReference>
<dbReference type="InterPro" id="IPR039430">
    <property type="entry name" value="Thymidylate_kin-like_dom"/>
</dbReference>
<dbReference type="InterPro" id="IPR018095">
    <property type="entry name" value="Thymidylate_kin_CS"/>
</dbReference>
<dbReference type="InterPro" id="IPR018094">
    <property type="entry name" value="Thymidylate_kinase"/>
</dbReference>
<dbReference type="NCBIfam" id="TIGR00041">
    <property type="entry name" value="DTMP_kinase"/>
    <property type="match status" value="1"/>
</dbReference>
<dbReference type="PANTHER" id="PTHR10344">
    <property type="entry name" value="THYMIDYLATE KINASE"/>
    <property type="match status" value="1"/>
</dbReference>
<dbReference type="PANTHER" id="PTHR10344:SF4">
    <property type="entry name" value="UMP-CMP KINASE 2, MITOCHONDRIAL"/>
    <property type="match status" value="1"/>
</dbReference>
<dbReference type="Pfam" id="PF02223">
    <property type="entry name" value="Thymidylate_kin"/>
    <property type="match status" value="1"/>
</dbReference>
<dbReference type="SUPFAM" id="SSF52540">
    <property type="entry name" value="P-loop containing nucleoside triphosphate hydrolases"/>
    <property type="match status" value="1"/>
</dbReference>
<dbReference type="PROSITE" id="PS01331">
    <property type="entry name" value="THYMIDYLATE_KINASE"/>
    <property type="match status" value="1"/>
</dbReference>
<sequence length="209" mass="23726">MQSKFIVIEGLDGAGKSTAISFVRKYLEKNNLAAIYTREPGGTKIAEELRNLVLHNKYDEEIHSDSELLMIYAGRVQHYRNLIAPALEKGINVVSDRFYWSSMAYQGGGRGVELSKIRALNDNFLNGCEPDLVIYLDIDPILGLQRAQKVGSPDRIEKAGLEFFNRTRKVFKDLVKDSDNAIEIDAAKSIQEVEKQIYLILDKHFNFQN</sequence>
<reference key="1">
    <citation type="journal article" date="2007" name="PLoS ONE">
        <title>Complete genomic characterization of a pathogenic A.II strain of Francisella tularensis subspecies tularensis.</title>
        <authorList>
            <person name="Beckstrom-Sternberg S.M."/>
            <person name="Auerbach R.K."/>
            <person name="Godbole S."/>
            <person name="Pearson J.V."/>
            <person name="Beckstrom-Sternberg J.S."/>
            <person name="Deng Z."/>
            <person name="Munk C."/>
            <person name="Kubota K."/>
            <person name="Zhou Y."/>
            <person name="Bruce D."/>
            <person name="Noronha J."/>
            <person name="Scheuermann R.H."/>
            <person name="Wang A."/>
            <person name="Wei X."/>
            <person name="Wang J."/>
            <person name="Hao J."/>
            <person name="Wagner D.M."/>
            <person name="Brettin T.S."/>
            <person name="Brown N."/>
            <person name="Gilna P."/>
            <person name="Keim P.S."/>
        </authorList>
    </citation>
    <scope>NUCLEOTIDE SEQUENCE [LARGE SCALE GENOMIC DNA]</scope>
    <source>
        <strain>WY96-3418</strain>
    </source>
</reference>